<name>HSP7E_SPIOL</name>
<feature type="initiator methionine" description="Removed">
    <location>
        <position position="1"/>
    </location>
</feature>
<feature type="chain" id="PRO_0000078356" description="Chloroplast envelope membrane 70 kDa heat shock-related protein">
    <location>
        <begin position="2"/>
        <end position="653"/>
    </location>
</feature>
<proteinExistence type="evidence at protein level"/>
<organism>
    <name type="scientific">Spinacia oleracea</name>
    <name type="common">Spinach</name>
    <dbReference type="NCBI Taxonomy" id="3562"/>
    <lineage>
        <taxon>Eukaryota</taxon>
        <taxon>Viridiplantae</taxon>
        <taxon>Streptophyta</taxon>
        <taxon>Embryophyta</taxon>
        <taxon>Tracheophyta</taxon>
        <taxon>Spermatophyta</taxon>
        <taxon>Magnoliopsida</taxon>
        <taxon>eudicotyledons</taxon>
        <taxon>Gunneridae</taxon>
        <taxon>Pentapetalae</taxon>
        <taxon>Caryophyllales</taxon>
        <taxon>Chenopodiaceae</taxon>
        <taxon>Chenopodioideae</taxon>
        <taxon>Anserineae</taxon>
        <taxon>Spinacia</taxon>
    </lineage>
</organism>
<dbReference type="EMBL" id="X61491">
    <property type="protein sequence ID" value="CAA43711.1"/>
    <property type="molecule type" value="mRNA"/>
</dbReference>
<dbReference type="PIR" id="A42582">
    <property type="entry name" value="A42582"/>
</dbReference>
<dbReference type="SMR" id="P29357"/>
<dbReference type="Proteomes" id="UP001155700">
    <property type="component" value="Unplaced"/>
</dbReference>
<dbReference type="GO" id="GO:0031969">
    <property type="term" value="C:chloroplast membrane"/>
    <property type="evidence" value="ECO:0007669"/>
    <property type="project" value="UniProtKB-SubCell"/>
</dbReference>
<dbReference type="GO" id="GO:0005737">
    <property type="term" value="C:cytoplasm"/>
    <property type="evidence" value="ECO:0000318"/>
    <property type="project" value="GO_Central"/>
</dbReference>
<dbReference type="GO" id="GO:0005524">
    <property type="term" value="F:ATP binding"/>
    <property type="evidence" value="ECO:0007669"/>
    <property type="project" value="UniProtKB-KW"/>
</dbReference>
<dbReference type="GO" id="GO:0016887">
    <property type="term" value="F:ATP hydrolysis activity"/>
    <property type="evidence" value="ECO:0000318"/>
    <property type="project" value="GO_Central"/>
</dbReference>
<dbReference type="GO" id="GO:0140662">
    <property type="term" value="F:ATP-dependent protein folding chaperone"/>
    <property type="evidence" value="ECO:0007669"/>
    <property type="project" value="InterPro"/>
</dbReference>
<dbReference type="GO" id="GO:0031072">
    <property type="term" value="F:heat shock protein binding"/>
    <property type="evidence" value="ECO:0000318"/>
    <property type="project" value="GO_Central"/>
</dbReference>
<dbReference type="GO" id="GO:0044183">
    <property type="term" value="F:protein folding chaperone"/>
    <property type="evidence" value="ECO:0000318"/>
    <property type="project" value="GO_Central"/>
</dbReference>
<dbReference type="GO" id="GO:0051085">
    <property type="term" value="P:chaperone cofactor-dependent protein refolding"/>
    <property type="evidence" value="ECO:0000318"/>
    <property type="project" value="GO_Central"/>
</dbReference>
<dbReference type="GO" id="GO:0042026">
    <property type="term" value="P:protein refolding"/>
    <property type="evidence" value="ECO:0000318"/>
    <property type="project" value="GO_Central"/>
</dbReference>
<dbReference type="CDD" id="cd10233">
    <property type="entry name" value="ASKHA_NBD_HSP70_HSPA1"/>
    <property type="match status" value="1"/>
</dbReference>
<dbReference type="FunFam" id="2.60.34.10:FF:000002">
    <property type="entry name" value="Heat shock 70 kDa"/>
    <property type="match status" value="1"/>
</dbReference>
<dbReference type="FunFam" id="3.90.640.10:FF:000002">
    <property type="entry name" value="Heat shock 70 kDa"/>
    <property type="match status" value="1"/>
</dbReference>
<dbReference type="FunFam" id="1.20.1270.10:FF:000028">
    <property type="entry name" value="Heat shock 70 kDa protein"/>
    <property type="match status" value="1"/>
</dbReference>
<dbReference type="FunFam" id="3.30.420.40:FF:000172">
    <property type="entry name" value="Heat shock 70 kDa protein"/>
    <property type="match status" value="1"/>
</dbReference>
<dbReference type="FunFam" id="3.30.30.30:FF:000001">
    <property type="entry name" value="heat shock 70 kDa protein-like"/>
    <property type="match status" value="1"/>
</dbReference>
<dbReference type="FunFam" id="3.30.420.40:FF:000465">
    <property type="entry name" value="Heat shock cognate 70 kDa protein 2"/>
    <property type="match status" value="1"/>
</dbReference>
<dbReference type="FunFam" id="3.30.420.40:FF:000026">
    <property type="entry name" value="Heat shock protein 70"/>
    <property type="match status" value="1"/>
</dbReference>
<dbReference type="Gene3D" id="1.20.1270.10">
    <property type="match status" value="1"/>
</dbReference>
<dbReference type="Gene3D" id="3.30.30.30">
    <property type="match status" value="1"/>
</dbReference>
<dbReference type="Gene3D" id="3.30.420.40">
    <property type="match status" value="2"/>
</dbReference>
<dbReference type="Gene3D" id="3.90.640.10">
    <property type="entry name" value="Actin, Chain A, domain 4"/>
    <property type="match status" value="1"/>
</dbReference>
<dbReference type="Gene3D" id="2.60.34.10">
    <property type="entry name" value="Substrate Binding Domain Of DNAk, Chain A, domain 1"/>
    <property type="match status" value="1"/>
</dbReference>
<dbReference type="InterPro" id="IPR043129">
    <property type="entry name" value="ATPase_NBD"/>
</dbReference>
<dbReference type="InterPro" id="IPR018181">
    <property type="entry name" value="Heat_shock_70_CS"/>
</dbReference>
<dbReference type="InterPro" id="IPR029048">
    <property type="entry name" value="HSP70_C_sf"/>
</dbReference>
<dbReference type="InterPro" id="IPR029047">
    <property type="entry name" value="HSP70_peptide-bd_sf"/>
</dbReference>
<dbReference type="InterPro" id="IPR013126">
    <property type="entry name" value="Hsp_70_fam"/>
</dbReference>
<dbReference type="NCBIfam" id="NF001413">
    <property type="entry name" value="PRK00290.1"/>
    <property type="match status" value="1"/>
</dbReference>
<dbReference type="PANTHER" id="PTHR19375">
    <property type="entry name" value="HEAT SHOCK PROTEIN 70KDA"/>
    <property type="match status" value="1"/>
</dbReference>
<dbReference type="Pfam" id="PF00012">
    <property type="entry name" value="HSP70"/>
    <property type="match status" value="1"/>
</dbReference>
<dbReference type="PRINTS" id="PR00301">
    <property type="entry name" value="HEATSHOCK70"/>
</dbReference>
<dbReference type="SUPFAM" id="SSF53067">
    <property type="entry name" value="Actin-like ATPase domain"/>
    <property type="match status" value="2"/>
</dbReference>
<dbReference type="SUPFAM" id="SSF100934">
    <property type="entry name" value="Heat shock protein 70kD (HSP70), C-terminal subdomain"/>
    <property type="match status" value="1"/>
</dbReference>
<dbReference type="SUPFAM" id="SSF100920">
    <property type="entry name" value="Heat shock protein 70kD (HSP70), peptide-binding domain"/>
    <property type="match status" value="1"/>
</dbReference>
<dbReference type="PROSITE" id="PS00297">
    <property type="entry name" value="HSP70_1"/>
    <property type="match status" value="1"/>
</dbReference>
<dbReference type="PROSITE" id="PS00329">
    <property type="entry name" value="HSP70_2"/>
    <property type="match status" value="1"/>
</dbReference>
<dbReference type="PROSITE" id="PS01036">
    <property type="entry name" value="HSP70_3"/>
    <property type="match status" value="1"/>
</dbReference>
<sequence>MAGKGEGPAIGIDLGTTYSRVGVWQHDRVEIIANDQGNRTTPSYVAFTDSERLIGDAAKNQVAMNPINTVFDAKRLIGRRFSDASVQADMKHRPFKVVSGPGEKPMIGVNYKGEEKQFAAEEISSMVLTKMKEIAEAYLGSTVKNAVVTVPAYFNDSQRQATKDAGVISGLNVMRIINEPTAAAIAYGLDKKATSVGEKNVLIFDLGGGTFDVSLLTIEEGIFEVKATAGDTHLGGEDFDNRMVNHSLQEFKRKNKKDIMETPGHIRRLRTACERAKRTLSSTAQTTIEIDSLYEGVDFYSPITRARFEELNIDLFRKCMEPVEKCLRDAKMDKSTVHDVVLVGGSTRIPKVQQLLQDFFNGKELCKSINPDEAVAYGAAVQAAILSGEGNEKVQDLLLLDVTPLSLGLETAGGVMTVLIPRNTTIPTKKEQVFSTYSDNQPGVLIQVYEGERTRTRDNNLLGKFELSGIPPGPRGVPQINVCFDIDANGILNVSAEDKTTGQKNKIRITNDKGRLSKEEIEKMVQEAEKYKSEDEEHKKKVESKNALENYAYNMRNIVKDEKIGAKLSEADKKKIEEAIDASIQWLDGNQLAEADEFDDKMKELESICNPIIAKMYQGAGGDMGGGMEDEGPTSGGGAGPKIEECRLSCHFF</sequence>
<accession>P29357</accession>
<comment type="function">
    <text>Sce70 may play a role in the transport of polypeptides across the envelope membrane and into the chloroplast.</text>
</comment>
<comment type="subcellular location">
    <subcellularLocation>
        <location>Plastid</location>
        <location>Chloroplast membrane</location>
    </subcellularLocation>
</comment>
<comment type="induction">
    <text>SCE70 expression is neither significantly influenced by light nor heat shock.</text>
</comment>
<comment type="miscellaneous">
    <text>There exists a 70 kDa heat-inducible gene (HSE70) in spinach leaves with sequence homology to SCE70.</text>
</comment>
<comment type="similarity">
    <text evidence="1">Belongs to the heat shock protein 70 family.</text>
</comment>
<evidence type="ECO:0000305" key="1"/>
<reference key="1">
    <citation type="journal article" date="1992" name="J. Biol. Chem.">
        <title>Isolation and characterization of a cDNA clone encoding a cognate 70-kDa heat shock protein of the chloroplast envelope.</title>
        <authorList>
            <person name="Ko K."/>
            <person name="Bornemisza O."/>
            <person name="Kourtz L."/>
            <person name="Ko Z.W."/>
            <person name="Plaxton W.C."/>
            <person name="Cashmore A.R."/>
        </authorList>
    </citation>
    <scope>NUCLEOTIDE SEQUENCE [MRNA]</scope>
    <scope>PARTIAL PROTEIN SEQUENCE</scope>
    <source>
        <tissue>Leaf</tissue>
    </source>
</reference>
<gene>
    <name type="primary">SCE70</name>
</gene>
<protein>
    <recommendedName>
        <fullName>Chloroplast envelope membrane 70 kDa heat shock-related protein</fullName>
    </recommendedName>
</protein>
<keyword id="KW-0067">ATP-binding</keyword>
<keyword id="KW-0150">Chloroplast</keyword>
<keyword id="KW-0903">Direct protein sequencing</keyword>
<keyword id="KW-0472">Membrane</keyword>
<keyword id="KW-0547">Nucleotide-binding</keyword>
<keyword id="KW-0934">Plastid</keyword>
<keyword id="KW-1185">Reference proteome</keyword>
<keyword id="KW-0346">Stress response</keyword>